<proteinExistence type="inferred from homology"/>
<dbReference type="EMBL" id="CP001407">
    <property type="protein sequence ID" value="ACO30267.1"/>
    <property type="molecule type" value="Genomic_DNA"/>
</dbReference>
<dbReference type="SMR" id="C1EWI4"/>
<dbReference type="KEGG" id="bcx:BCA_0588"/>
<dbReference type="PATRIC" id="fig|572264.18.peg.556"/>
<dbReference type="Proteomes" id="UP000002210">
    <property type="component" value="Chromosome"/>
</dbReference>
<dbReference type="HAMAP" id="MF_01232">
    <property type="entry name" value="UPF0229"/>
    <property type="match status" value="1"/>
</dbReference>
<dbReference type="InterPro" id="IPR014230">
    <property type="entry name" value="Spore_YhbH"/>
</dbReference>
<dbReference type="InterPro" id="IPR006698">
    <property type="entry name" value="UPF0229"/>
</dbReference>
<dbReference type="NCBIfam" id="TIGR02877">
    <property type="entry name" value="spore_yhbH"/>
    <property type="match status" value="1"/>
</dbReference>
<dbReference type="PANTHER" id="PTHR30510">
    <property type="entry name" value="UPF0229 PROTEIN YEAH"/>
    <property type="match status" value="1"/>
</dbReference>
<dbReference type="PANTHER" id="PTHR30510:SF2">
    <property type="entry name" value="UPF0229 PROTEIN YEAH"/>
    <property type="match status" value="1"/>
</dbReference>
<dbReference type="Pfam" id="PF04285">
    <property type="entry name" value="DUF444"/>
    <property type="match status" value="2"/>
</dbReference>
<accession>C1EWI4</accession>
<name>Y588_BACC3</name>
<reference key="1">
    <citation type="submission" date="2009-02" db="EMBL/GenBank/DDBJ databases">
        <title>Genome sequence of Bacillus cereus 03BB102.</title>
        <authorList>
            <person name="Dodson R.J."/>
            <person name="Jackson P."/>
            <person name="Munk A.C."/>
            <person name="Brettin T."/>
            <person name="Bruce D."/>
            <person name="Detter C."/>
            <person name="Tapia R."/>
            <person name="Han C."/>
            <person name="Sutton G."/>
            <person name="Sims D."/>
        </authorList>
    </citation>
    <scope>NUCLEOTIDE SEQUENCE [LARGE SCALE GENOMIC DNA]</scope>
    <source>
        <strain>03BB102</strain>
    </source>
</reference>
<evidence type="ECO:0000255" key="1">
    <source>
        <dbReference type="HAMAP-Rule" id="MF_01232"/>
    </source>
</evidence>
<evidence type="ECO:0000256" key="2">
    <source>
        <dbReference type="SAM" id="MobiDB-lite"/>
    </source>
</evidence>
<sequence>MGEENQPNYTISQENWSLHRKGYDDQQRHQEKVQEAIKNNLPDLVTEESIVMSNGKDVVKIPIRSLDEYKIRYNYDKNKHVGQGNGDSKVGDVVARDGSGGQKQKGPGKGQGAGDAAGEDYYEAEVSILELEQAFFKELELPNLKRKEMDENRIEHVEFNDIRKTGLWGNIDKKRTMISAYKRNAMRGKASFHPIHQEDLKFRTWNEVLKPDSKAVVLAMMDTSGSMGIWEKYMARSFFFWMTRFLRTKYETVDIEFIAHHTEAKVVPEEEFFSKGESGGTICSSVYKKALELIDNKYSPDRYNIYPFHFSDGDNLTSDNARCVKLVEELMKKCNMFGYGEVNQYNRHSTLMSAYKNIKDENFRYYILKQKADVFHAMKSFFREEAGEKMA</sequence>
<feature type="chain" id="PRO_1000164975" description="UPF0229 protein BCA_0588">
    <location>
        <begin position="1"/>
        <end position="391"/>
    </location>
</feature>
<feature type="region of interest" description="Disordered" evidence="2">
    <location>
        <begin position="1"/>
        <end position="31"/>
    </location>
</feature>
<feature type="region of interest" description="Disordered" evidence="2">
    <location>
        <begin position="80"/>
        <end position="117"/>
    </location>
</feature>
<feature type="compositionally biased region" description="Polar residues" evidence="2">
    <location>
        <begin position="1"/>
        <end position="16"/>
    </location>
</feature>
<feature type="compositionally biased region" description="Basic and acidic residues" evidence="2">
    <location>
        <begin position="21"/>
        <end position="31"/>
    </location>
</feature>
<feature type="compositionally biased region" description="Gly residues" evidence="2">
    <location>
        <begin position="98"/>
        <end position="115"/>
    </location>
</feature>
<protein>
    <recommendedName>
        <fullName evidence="1">UPF0229 protein BCA_0588</fullName>
    </recommendedName>
</protein>
<comment type="similarity">
    <text evidence="1">Belongs to the UPF0229 family.</text>
</comment>
<gene>
    <name type="ordered locus">BCA_0588</name>
</gene>
<organism>
    <name type="scientific">Bacillus cereus (strain 03BB102)</name>
    <dbReference type="NCBI Taxonomy" id="572264"/>
    <lineage>
        <taxon>Bacteria</taxon>
        <taxon>Bacillati</taxon>
        <taxon>Bacillota</taxon>
        <taxon>Bacilli</taxon>
        <taxon>Bacillales</taxon>
        <taxon>Bacillaceae</taxon>
        <taxon>Bacillus</taxon>
        <taxon>Bacillus cereus group</taxon>
    </lineage>
</organism>